<comment type="function">
    <text evidence="3">Together with an NADPH cytochrome P450 the enzyme system catalyzes the terminal hydroxylation as the first step in the assimilation of alkanes and fatty acids.</text>
</comment>
<comment type="cofactor">
    <cofactor evidence="1">
        <name>heme</name>
        <dbReference type="ChEBI" id="CHEBI:30413"/>
    </cofactor>
</comment>
<comment type="subcellular location">
    <subcellularLocation>
        <location evidence="5">Membrane</location>
    </subcellularLocation>
    <subcellularLocation>
        <location>Membrane</location>
        <topology>Single-pass membrane protein</topology>
    </subcellularLocation>
</comment>
<comment type="induction">
    <text evidence="4">By alkanes.</text>
</comment>
<comment type="similarity">
    <text evidence="5">Belongs to the cytochrome P450 family.</text>
</comment>
<name>CP52C_CANMA</name>
<dbReference type="EC" id="1.14.14.-"/>
<dbReference type="EMBL" id="D00481">
    <property type="protein sequence ID" value="BAA00371.1"/>
    <property type="molecule type" value="Genomic_DNA"/>
</dbReference>
<dbReference type="EMBL" id="M27081">
    <property type="protein sequence ID" value="AAA34320.1"/>
    <property type="molecule type" value="mRNA"/>
</dbReference>
<dbReference type="EMBL" id="X51931">
    <property type="protein sequence ID" value="CAA36197.1"/>
    <property type="molecule type" value="mRNA"/>
</dbReference>
<dbReference type="PIR" id="B56578">
    <property type="entry name" value="O4CKA3"/>
</dbReference>
<dbReference type="SMR" id="P16496"/>
<dbReference type="BioCyc" id="MetaCyc:MONOMER-18777"/>
<dbReference type="GO" id="GO:0016020">
    <property type="term" value="C:membrane"/>
    <property type="evidence" value="ECO:0007669"/>
    <property type="project" value="UniProtKB-SubCell"/>
</dbReference>
<dbReference type="GO" id="GO:0020037">
    <property type="term" value="F:heme binding"/>
    <property type="evidence" value="ECO:0007669"/>
    <property type="project" value="InterPro"/>
</dbReference>
<dbReference type="GO" id="GO:0005506">
    <property type="term" value="F:iron ion binding"/>
    <property type="evidence" value="ECO:0007669"/>
    <property type="project" value="InterPro"/>
</dbReference>
<dbReference type="GO" id="GO:0016712">
    <property type="term" value="F:oxidoreductase activity, acting on paired donors, with incorporation or reduction of molecular oxygen, reduced flavin or flavoprotein as one donor, and incorporation of one atom of oxygen"/>
    <property type="evidence" value="ECO:0007669"/>
    <property type="project" value="InterPro"/>
</dbReference>
<dbReference type="CDD" id="cd11063">
    <property type="entry name" value="CYP52"/>
    <property type="match status" value="1"/>
</dbReference>
<dbReference type="Gene3D" id="1.10.630.10">
    <property type="entry name" value="Cytochrome P450"/>
    <property type="match status" value="1"/>
</dbReference>
<dbReference type="InterPro" id="IPR001128">
    <property type="entry name" value="Cyt_P450"/>
</dbReference>
<dbReference type="InterPro" id="IPR017972">
    <property type="entry name" value="Cyt_P450_CS"/>
</dbReference>
<dbReference type="InterPro" id="IPR002974">
    <property type="entry name" value="Cyt_P450_E_CYP52_ascomycetes"/>
</dbReference>
<dbReference type="InterPro" id="IPR047146">
    <property type="entry name" value="Cyt_P450_E_CYP52_fungi"/>
</dbReference>
<dbReference type="InterPro" id="IPR002402">
    <property type="entry name" value="Cyt_P450_E_grp-II"/>
</dbReference>
<dbReference type="InterPro" id="IPR036396">
    <property type="entry name" value="Cyt_P450_sf"/>
</dbReference>
<dbReference type="PANTHER" id="PTHR24287">
    <property type="entry name" value="P450, PUTATIVE (EUROFUNG)-RELATED"/>
    <property type="match status" value="1"/>
</dbReference>
<dbReference type="PANTHER" id="PTHR24287:SF1">
    <property type="entry name" value="P450, PUTATIVE (EUROFUNG)-RELATED"/>
    <property type="match status" value="1"/>
</dbReference>
<dbReference type="Pfam" id="PF00067">
    <property type="entry name" value="p450"/>
    <property type="match status" value="1"/>
</dbReference>
<dbReference type="PRINTS" id="PR00464">
    <property type="entry name" value="EP450II"/>
</dbReference>
<dbReference type="PRINTS" id="PR01239">
    <property type="entry name" value="EP450IICYP52"/>
</dbReference>
<dbReference type="PRINTS" id="PR00385">
    <property type="entry name" value="P450"/>
</dbReference>
<dbReference type="SUPFAM" id="SSF48264">
    <property type="entry name" value="Cytochrome P450"/>
    <property type="match status" value="1"/>
</dbReference>
<dbReference type="PROSITE" id="PS00086">
    <property type="entry name" value="CYTOCHROME_P450"/>
    <property type="match status" value="1"/>
</dbReference>
<accession>P16496</accession>
<accession>O94080</accession>
<accession>P20017</accession>
<gene>
    <name type="primary">CYP52A3-A</name>
</gene>
<evidence type="ECO:0000250" key="1"/>
<evidence type="ECO:0000255" key="2"/>
<evidence type="ECO:0000269" key="3">
    <source>
    </source>
</evidence>
<evidence type="ECO:0000269" key="4">
    <source ref="1"/>
</evidence>
<evidence type="ECO:0000305" key="5"/>
<proteinExistence type="evidence at protein level"/>
<keyword id="KW-0903">Direct protein sequencing</keyword>
<keyword id="KW-0349">Heme</keyword>
<keyword id="KW-0408">Iron</keyword>
<keyword id="KW-0472">Membrane</keyword>
<keyword id="KW-0479">Metal-binding</keyword>
<keyword id="KW-0503">Monooxygenase</keyword>
<keyword id="KW-0560">Oxidoreductase</keyword>
<keyword id="KW-0812">Transmembrane</keyword>
<keyword id="KW-1133">Transmembrane helix</keyword>
<protein>
    <recommendedName>
        <fullName>Cytochrome P450 52A3-A</fullName>
        <shortName>CYP52A3-A</shortName>
        <ecNumber>1.14.14.-</ecNumber>
    </recommendedName>
    <alternativeName>
        <fullName>Alkane-inducible P450-ALK1-A</fullName>
    </alternativeName>
    <alternativeName>
        <fullName>CYPLIIA3</fullName>
    </alternativeName>
    <alternativeName>
        <fullName>Cytochrome P-450ALK</fullName>
    </alternativeName>
    <alternativeName>
        <fullName>Cytochrome P450-CM1</fullName>
    </alternativeName>
</protein>
<sequence>MAIEQIIEEVLPYLTKWYTILFGAAVTYFLSIALRNKFYEYKLKCENPVYFEDAGLFGIPALIDIIKVRKAGQLADYTDTTFDKYPNLSSYMTVAGVLKIVFTVDPENIKAVLATQFNDFALGARHAHFDPLLGDGIFTLDGEGWKLSRAMLRPQFAREQIAHVKALEPHVQILAKQIKLNKGKTFDLQELFFRFTVDTATEFLFGESVHSLYDEKLGIPAPNDIPGRENFAEAFNTSQHYLATRTYSQIFYWLTNPKEFRDCNAKVHKLAQYFVNTALNATEKEVEEKSKGGYVFLYELVKQTRDPKVLQDQLLNIMVAGRDTTAGLLSFAMFELARNPKIWNKLREEVEVNFGLGDEARVDEISFETLKKCEYLKAVLNETLRMYPSVPINFRTATRDTTLPRGGGKDGNSPIFVPKGSSVVYSVYKTHRLKQFYGEDAYEFRPERWFEPSTRKLGWAYLPFNGGPRICLGQQFALTEASYVIARLAQMFEHLESKDETYPPNKCIHLTMNHNEGVFISAK</sequence>
<reference key="1">
    <citation type="journal article" date="1989" name="Agric. Biol. Chem.">
        <title>Purification of cytochrome P-450alk from n-alkane-grown cells of Candida maltosa, and cloning and nucleotide sequencing of the encoding gene.</title>
        <authorList>
            <person name="Takagi M."/>
            <person name="Ohkuma M."/>
            <person name="Kobayashi N."/>
            <person name="Watanabe M."/>
            <person name="Yano K."/>
        </authorList>
    </citation>
    <scope>NUCLEOTIDE SEQUENCE [GENOMIC DNA]</scope>
    <scope>PROTEIN SEQUENCE OF 2-13</scope>
    <scope>INDUCTION</scope>
    <source>
        <strain>ATCC 28140 / CBS 5611 / IAM 12247 / JCM 1504 / NBRC 1977</strain>
    </source>
</reference>
<reference key="2">
    <citation type="journal article" date="1989" name="Biochem. Biophys. Res. Commun.">
        <title>Molecular cloning and characterization of the primary structure of the alkane hydroxylating cytochrome P-450 from the yeast Candida maltosa.</title>
        <authorList>
            <person name="Schunck W.-H."/>
            <person name="Kaergel E."/>
            <person name="Gross B."/>
            <person name="Wiedmann B."/>
            <person name="Mauersberger S."/>
            <person name="Koepke K."/>
            <person name="Kiessling U."/>
            <person name="Strauss M."/>
            <person name="Gaestel M."/>
            <person name="Mueller H.-G."/>
        </authorList>
    </citation>
    <scope>NUCLEOTIDE SEQUENCE [MRNA]</scope>
    <source>
        <strain>EH15</strain>
    </source>
</reference>
<reference key="3">
    <citation type="journal article" date="1991" name="Eur. J. Cell Biol.">
        <title>Comparison of two cytochromes P-450 from Candida maltosa: primary structures, substrate specificities and effects of their expression in Saccharomyces cerevisiae on the proliferation of the endoplasmic reticulum.</title>
        <authorList>
            <person name="Schunck W.-H."/>
            <person name="Vogel F."/>
            <person name="Gross B."/>
            <person name="Kaergel E."/>
            <person name="Mauersberger S."/>
            <person name="Koepke K."/>
            <person name="Gengnagel C."/>
            <person name="Mueller H.-G."/>
        </authorList>
    </citation>
    <scope>NUCLEOTIDE SEQUENCE [MRNA]</scope>
    <source>
        <strain>EH15</strain>
    </source>
</reference>
<reference key="4">
    <citation type="journal article" date="1996" name="Arch. Biochem. Biophys.">
        <title>Characterization of the n-alkane and fatty acid hydroxylating cytochrome P450 forms 52A3 and 52A4.</title>
        <authorList>
            <person name="Scheller U."/>
            <person name="Zimmer T."/>
            <person name="Kargel E."/>
            <person name="Schunck W.H."/>
        </authorList>
    </citation>
    <scope>PROTEIN SEQUENCE OF 2-16</scope>
    <scope>FUNCTION</scope>
</reference>
<reference key="5">
    <citation type="journal article" date="1996" name="Biochem. Biophys. Res. Commun.">
        <title>The CYP52 multigene family of Candida maltosa encodes functionally diverse n-alkane-inducible cytochromes P450.</title>
        <authorList>
            <person name="Zimmer T."/>
            <person name="Ohkuma M."/>
            <person name="Ohta A."/>
            <person name="Takagi M."/>
            <person name="Schunck W.H."/>
        </authorList>
    </citation>
    <scope>CHARACTERIZATION</scope>
</reference>
<feature type="initiator methionine" description="Removed" evidence="3 4">
    <location>
        <position position="1"/>
    </location>
</feature>
<feature type="chain" id="PRO_0000052021" description="Cytochrome P450 52A3-A">
    <location>
        <begin position="2"/>
        <end position="523"/>
    </location>
</feature>
<feature type="transmembrane region" description="Helical" evidence="2">
    <location>
        <begin position="17"/>
        <end position="34"/>
    </location>
</feature>
<feature type="binding site" description="axial binding residue" evidence="1">
    <location>
        <position position="471"/>
    </location>
    <ligand>
        <name>heme</name>
        <dbReference type="ChEBI" id="CHEBI:30413"/>
    </ligand>
    <ligandPart>
        <name>Fe</name>
        <dbReference type="ChEBI" id="CHEBI:18248"/>
    </ligandPart>
</feature>
<feature type="sequence variant" description="In strain: EH15.">
    <original>L</original>
    <variation>I</variation>
    <location>
        <position position="21"/>
    </location>
</feature>
<feature type="sequence variant" description="In strain: EH15.">
    <original>E</original>
    <variation>Q</variation>
    <location>
        <position position="52"/>
    </location>
</feature>
<feature type="sequence variant" description="In strain: EH15.">
    <original>L</original>
    <variation>H</variation>
    <location>
        <position position="147"/>
    </location>
</feature>
<feature type="sequence conflict" description="In Ref. 2; AAA34320." evidence="5" ref="2">
    <original>L</original>
    <variation>S</variation>
    <location>
        <position position="217"/>
    </location>
</feature>
<feature type="sequence conflict" description="In Ref. 2; AAA34320." evidence="5" ref="2">
    <location>
        <begin position="220"/>
        <end position="221"/>
    </location>
</feature>
<feature type="sequence conflict" description="In Ref. 2; AAA34320." evidence="5" ref="2">
    <original>FA</original>
    <variation>VR</variation>
    <location>
        <begin position="231"/>
        <end position="232"/>
    </location>
</feature>
<organism>
    <name type="scientific">Candida maltosa</name>
    <name type="common">Yeast</name>
    <dbReference type="NCBI Taxonomy" id="5479"/>
    <lineage>
        <taxon>Eukaryota</taxon>
        <taxon>Fungi</taxon>
        <taxon>Dikarya</taxon>
        <taxon>Ascomycota</taxon>
        <taxon>Saccharomycotina</taxon>
        <taxon>Pichiomycetes</taxon>
        <taxon>Debaryomycetaceae</taxon>
        <taxon>Candida/Lodderomyces clade</taxon>
        <taxon>Candida</taxon>
    </lineage>
</organism>